<organism>
    <name type="scientific">Clostridium botulinum (strain Langeland / NCTC 10281 / Type F)</name>
    <dbReference type="NCBI Taxonomy" id="441772"/>
    <lineage>
        <taxon>Bacteria</taxon>
        <taxon>Bacillati</taxon>
        <taxon>Bacillota</taxon>
        <taxon>Clostridia</taxon>
        <taxon>Eubacteriales</taxon>
        <taxon>Clostridiaceae</taxon>
        <taxon>Clostridium</taxon>
    </lineage>
</organism>
<evidence type="ECO:0000255" key="1">
    <source>
        <dbReference type="HAMAP-Rule" id="MF_00658"/>
    </source>
</evidence>
<reference key="1">
    <citation type="submission" date="2007-06" db="EMBL/GenBank/DDBJ databases">
        <authorList>
            <person name="Brinkac L.M."/>
            <person name="Daugherty S."/>
            <person name="Dodson R.J."/>
            <person name="Madupu R."/>
            <person name="Brown J.L."/>
            <person name="Bruce D."/>
            <person name="Detter C."/>
            <person name="Munk C."/>
            <person name="Smith L.A."/>
            <person name="Smith T.J."/>
            <person name="White O."/>
            <person name="Brettin T.S."/>
        </authorList>
    </citation>
    <scope>NUCLEOTIDE SEQUENCE [LARGE SCALE GENOMIC DNA]</scope>
    <source>
        <strain>Langeland / NCTC 10281 / Type F</strain>
    </source>
</reference>
<keyword id="KW-0963">Cytoplasm</keyword>
<keyword id="KW-0489">Methyltransferase</keyword>
<keyword id="KW-0698">rRNA processing</keyword>
<keyword id="KW-0949">S-adenosyl-L-methionine</keyword>
<keyword id="KW-0808">Transferase</keyword>
<protein>
    <recommendedName>
        <fullName evidence="1">Ribosomal RNA large subunit methyltransferase H</fullName>
        <ecNumber evidence="1">2.1.1.177</ecNumber>
    </recommendedName>
    <alternativeName>
        <fullName evidence="1">23S rRNA (pseudouridine1915-N3)-methyltransferase</fullName>
    </alternativeName>
    <alternativeName>
        <fullName evidence="1">23S rRNA m3Psi1915 methyltransferase</fullName>
    </alternativeName>
    <alternativeName>
        <fullName evidence="1">rRNA (pseudouridine-N3-)-methyltransferase RlmH</fullName>
    </alternativeName>
</protein>
<sequence>MNISIISVGKIKEKFLKAAIDEYSKRLSKYCKLNIIEVTDEKTPDNASLKEENIIKDKEGNLILKHIKDNSFVIALDLKGKSITSEEFSGLIENCRLTGNSTIAFVIGGSLGLSEQVLSRANYKLSFSKMTFPHQLFRVMLLEQVYRAFRILCGEPYHK</sequence>
<accession>A7GJG3</accession>
<comment type="function">
    <text evidence="1">Specifically methylates the pseudouridine at position 1915 (m3Psi1915) in 23S rRNA.</text>
</comment>
<comment type="catalytic activity">
    <reaction evidence="1">
        <text>pseudouridine(1915) in 23S rRNA + S-adenosyl-L-methionine = N(3)-methylpseudouridine(1915) in 23S rRNA + S-adenosyl-L-homocysteine + H(+)</text>
        <dbReference type="Rhea" id="RHEA:42752"/>
        <dbReference type="Rhea" id="RHEA-COMP:10221"/>
        <dbReference type="Rhea" id="RHEA-COMP:10222"/>
        <dbReference type="ChEBI" id="CHEBI:15378"/>
        <dbReference type="ChEBI" id="CHEBI:57856"/>
        <dbReference type="ChEBI" id="CHEBI:59789"/>
        <dbReference type="ChEBI" id="CHEBI:65314"/>
        <dbReference type="ChEBI" id="CHEBI:74486"/>
        <dbReference type="EC" id="2.1.1.177"/>
    </reaction>
</comment>
<comment type="subunit">
    <text evidence="1">Homodimer.</text>
</comment>
<comment type="subcellular location">
    <subcellularLocation>
        <location evidence="1">Cytoplasm</location>
    </subcellularLocation>
</comment>
<comment type="similarity">
    <text evidence="1">Belongs to the RNA methyltransferase RlmH family.</text>
</comment>
<dbReference type="EC" id="2.1.1.177" evidence="1"/>
<dbReference type="EMBL" id="CP000728">
    <property type="protein sequence ID" value="ABS39342.1"/>
    <property type="molecule type" value="Genomic_DNA"/>
</dbReference>
<dbReference type="RefSeq" id="WP_012101180.1">
    <property type="nucleotide sequence ID" value="NC_009699.1"/>
</dbReference>
<dbReference type="SMR" id="A7GJG3"/>
<dbReference type="KEGG" id="cbf:CLI_3791"/>
<dbReference type="HOGENOM" id="CLU_100552_0_0_9"/>
<dbReference type="Proteomes" id="UP000002410">
    <property type="component" value="Chromosome"/>
</dbReference>
<dbReference type="GO" id="GO:0005737">
    <property type="term" value="C:cytoplasm"/>
    <property type="evidence" value="ECO:0007669"/>
    <property type="project" value="UniProtKB-SubCell"/>
</dbReference>
<dbReference type="GO" id="GO:0070038">
    <property type="term" value="F:rRNA (pseudouridine-N3-)-methyltransferase activity"/>
    <property type="evidence" value="ECO:0007669"/>
    <property type="project" value="UniProtKB-UniRule"/>
</dbReference>
<dbReference type="CDD" id="cd18081">
    <property type="entry name" value="RlmH-like"/>
    <property type="match status" value="1"/>
</dbReference>
<dbReference type="Gene3D" id="3.40.1280.10">
    <property type="match status" value="1"/>
</dbReference>
<dbReference type="HAMAP" id="MF_00658">
    <property type="entry name" value="23SrRNA_methyltr_H"/>
    <property type="match status" value="1"/>
</dbReference>
<dbReference type="InterPro" id="IPR029028">
    <property type="entry name" value="Alpha/beta_knot_MTases"/>
</dbReference>
<dbReference type="InterPro" id="IPR003742">
    <property type="entry name" value="RlmH-like"/>
</dbReference>
<dbReference type="InterPro" id="IPR029026">
    <property type="entry name" value="tRNA_m1G_MTases_N"/>
</dbReference>
<dbReference type="NCBIfam" id="NF000985">
    <property type="entry name" value="PRK00103.1-3"/>
    <property type="match status" value="1"/>
</dbReference>
<dbReference type="NCBIfam" id="TIGR00246">
    <property type="entry name" value="tRNA_RlmH_YbeA"/>
    <property type="match status" value="1"/>
</dbReference>
<dbReference type="PANTHER" id="PTHR33603">
    <property type="entry name" value="METHYLTRANSFERASE"/>
    <property type="match status" value="1"/>
</dbReference>
<dbReference type="PANTHER" id="PTHR33603:SF1">
    <property type="entry name" value="RIBOSOMAL RNA LARGE SUBUNIT METHYLTRANSFERASE H"/>
    <property type="match status" value="1"/>
</dbReference>
<dbReference type="Pfam" id="PF02590">
    <property type="entry name" value="SPOUT_MTase"/>
    <property type="match status" value="1"/>
</dbReference>
<dbReference type="PIRSF" id="PIRSF004505">
    <property type="entry name" value="MT_bac"/>
    <property type="match status" value="1"/>
</dbReference>
<dbReference type="SUPFAM" id="SSF75217">
    <property type="entry name" value="alpha/beta knot"/>
    <property type="match status" value="1"/>
</dbReference>
<feature type="chain" id="PRO_1000061775" description="Ribosomal RNA large subunit methyltransferase H">
    <location>
        <begin position="1"/>
        <end position="159"/>
    </location>
</feature>
<feature type="binding site" evidence="1">
    <location>
        <position position="76"/>
    </location>
    <ligand>
        <name>S-adenosyl-L-methionine</name>
        <dbReference type="ChEBI" id="CHEBI:59789"/>
    </ligand>
</feature>
<feature type="binding site" evidence="1">
    <location>
        <position position="108"/>
    </location>
    <ligand>
        <name>S-adenosyl-L-methionine</name>
        <dbReference type="ChEBI" id="CHEBI:59789"/>
    </ligand>
</feature>
<feature type="binding site" evidence="1">
    <location>
        <begin position="127"/>
        <end position="132"/>
    </location>
    <ligand>
        <name>S-adenosyl-L-methionine</name>
        <dbReference type="ChEBI" id="CHEBI:59789"/>
    </ligand>
</feature>
<gene>
    <name evidence="1" type="primary">rlmH</name>
    <name type="ordered locus">CLI_3791</name>
</gene>
<name>RLMH_CLOBL</name>
<proteinExistence type="inferred from homology"/>